<proteinExistence type="inferred from homology"/>
<evidence type="ECO:0000255" key="1">
    <source>
        <dbReference type="HAMAP-Rule" id="MF_00074"/>
    </source>
</evidence>
<name>RSMG_BACCR</name>
<sequence length="239" mass="27225">MNIEQFQSMLEEKGITLSSRQLEQFKIYFETLVEWNEKMNLTAITEKEEVYLKHFFDSITAAFYYDFSKPFSICDVGAGAGFPSIPLKICFPHLKVTIVDSLQKRINFLNHLAQKLELSDVAFCHDRAETFGKKEGVRESYDIVMARAVARLSVLSELCLPLVKVGGTFIAMKGAAANEEIENGKYALEVLGGELKEMSTFQLPFEESERNILLIEKKRKTPKKYPRKPGTPNKLPIEK</sequence>
<gene>
    <name evidence="1" type="primary">rsmG</name>
    <name type="ordered locus">BC_5484</name>
</gene>
<dbReference type="EC" id="2.1.1.-" evidence="1"/>
<dbReference type="EMBL" id="AE016877">
    <property type="protein sequence ID" value="AAP12338.1"/>
    <property type="molecule type" value="Genomic_DNA"/>
</dbReference>
<dbReference type="RefSeq" id="NP_835137.1">
    <property type="nucleotide sequence ID" value="NC_004722.1"/>
</dbReference>
<dbReference type="RefSeq" id="WP_001019628.1">
    <property type="nucleotide sequence ID" value="NZ_CP138336.1"/>
</dbReference>
<dbReference type="SMR" id="Q814F8"/>
<dbReference type="STRING" id="226900.BC_5484"/>
<dbReference type="GeneID" id="92885935"/>
<dbReference type="KEGG" id="bce:BC5484"/>
<dbReference type="PATRIC" id="fig|226900.8.peg.5662"/>
<dbReference type="HOGENOM" id="CLU_065341_0_2_9"/>
<dbReference type="OrthoDB" id="9808773at2"/>
<dbReference type="PRO" id="PR:Q814F8"/>
<dbReference type="Proteomes" id="UP000001417">
    <property type="component" value="Chromosome"/>
</dbReference>
<dbReference type="GO" id="GO:0005829">
    <property type="term" value="C:cytosol"/>
    <property type="evidence" value="ECO:0000318"/>
    <property type="project" value="GO_Central"/>
</dbReference>
<dbReference type="GO" id="GO:0070043">
    <property type="term" value="F:rRNA (guanine-N7-)-methyltransferase activity"/>
    <property type="evidence" value="ECO:0000318"/>
    <property type="project" value="GO_Central"/>
</dbReference>
<dbReference type="CDD" id="cd02440">
    <property type="entry name" value="AdoMet_MTases"/>
    <property type="match status" value="1"/>
</dbReference>
<dbReference type="FunFam" id="3.40.50.150:FF:000041">
    <property type="entry name" value="Ribosomal RNA small subunit methyltransferase G"/>
    <property type="match status" value="1"/>
</dbReference>
<dbReference type="Gene3D" id="3.40.50.150">
    <property type="entry name" value="Vaccinia Virus protein VP39"/>
    <property type="match status" value="1"/>
</dbReference>
<dbReference type="HAMAP" id="MF_00074">
    <property type="entry name" value="16SrRNA_methyltr_G"/>
    <property type="match status" value="1"/>
</dbReference>
<dbReference type="InterPro" id="IPR003682">
    <property type="entry name" value="rRNA_ssu_MeTfrase_G"/>
</dbReference>
<dbReference type="InterPro" id="IPR029063">
    <property type="entry name" value="SAM-dependent_MTases_sf"/>
</dbReference>
<dbReference type="NCBIfam" id="TIGR00138">
    <property type="entry name" value="rsmG_gidB"/>
    <property type="match status" value="1"/>
</dbReference>
<dbReference type="PANTHER" id="PTHR31760">
    <property type="entry name" value="S-ADENOSYL-L-METHIONINE-DEPENDENT METHYLTRANSFERASES SUPERFAMILY PROTEIN"/>
    <property type="match status" value="1"/>
</dbReference>
<dbReference type="PANTHER" id="PTHR31760:SF0">
    <property type="entry name" value="S-ADENOSYL-L-METHIONINE-DEPENDENT METHYLTRANSFERASES SUPERFAMILY PROTEIN"/>
    <property type="match status" value="1"/>
</dbReference>
<dbReference type="Pfam" id="PF02527">
    <property type="entry name" value="GidB"/>
    <property type="match status" value="1"/>
</dbReference>
<dbReference type="PIRSF" id="PIRSF003078">
    <property type="entry name" value="GidB"/>
    <property type="match status" value="1"/>
</dbReference>
<dbReference type="SUPFAM" id="SSF53335">
    <property type="entry name" value="S-adenosyl-L-methionine-dependent methyltransferases"/>
    <property type="match status" value="1"/>
</dbReference>
<protein>
    <recommendedName>
        <fullName evidence="1">Ribosomal RNA small subunit methyltransferase G</fullName>
        <ecNumber evidence="1">2.1.1.-</ecNumber>
    </recommendedName>
    <alternativeName>
        <fullName evidence="1">16S rRNA 7-methylguanosine methyltransferase</fullName>
        <shortName evidence="1">16S rRNA m7G methyltransferase</shortName>
    </alternativeName>
</protein>
<feature type="chain" id="PRO_0000184211" description="Ribosomal RNA small subunit methyltransferase G">
    <location>
        <begin position="1"/>
        <end position="239"/>
    </location>
</feature>
<feature type="binding site" evidence="1">
    <location>
        <position position="77"/>
    </location>
    <ligand>
        <name>S-adenosyl-L-methionine</name>
        <dbReference type="ChEBI" id="CHEBI:59789"/>
    </ligand>
</feature>
<feature type="binding site" evidence="1">
    <location>
        <position position="82"/>
    </location>
    <ligand>
        <name>S-adenosyl-L-methionine</name>
        <dbReference type="ChEBI" id="CHEBI:59789"/>
    </ligand>
</feature>
<feature type="binding site" evidence="1">
    <location>
        <begin position="128"/>
        <end position="129"/>
    </location>
    <ligand>
        <name>S-adenosyl-L-methionine</name>
        <dbReference type="ChEBI" id="CHEBI:59789"/>
    </ligand>
</feature>
<feature type="binding site" evidence="1">
    <location>
        <position position="147"/>
    </location>
    <ligand>
        <name>S-adenosyl-L-methionine</name>
        <dbReference type="ChEBI" id="CHEBI:59789"/>
    </ligand>
</feature>
<accession>Q814F8</accession>
<keyword id="KW-0963">Cytoplasm</keyword>
<keyword id="KW-0489">Methyltransferase</keyword>
<keyword id="KW-1185">Reference proteome</keyword>
<keyword id="KW-0698">rRNA processing</keyword>
<keyword id="KW-0949">S-adenosyl-L-methionine</keyword>
<keyword id="KW-0808">Transferase</keyword>
<comment type="function">
    <text evidence="1">Specifically methylates the N7 position of guanine in position 535 of 16S rRNA.</text>
</comment>
<comment type="subcellular location">
    <subcellularLocation>
        <location evidence="1">Cytoplasm</location>
    </subcellularLocation>
</comment>
<comment type="similarity">
    <text evidence="1">Belongs to the methyltransferase superfamily. RNA methyltransferase RsmG family.</text>
</comment>
<reference key="1">
    <citation type="journal article" date="2003" name="Nature">
        <title>Genome sequence of Bacillus cereus and comparative analysis with Bacillus anthracis.</title>
        <authorList>
            <person name="Ivanova N."/>
            <person name="Sorokin A."/>
            <person name="Anderson I."/>
            <person name="Galleron N."/>
            <person name="Candelon B."/>
            <person name="Kapatral V."/>
            <person name="Bhattacharyya A."/>
            <person name="Reznik G."/>
            <person name="Mikhailova N."/>
            <person name="Lapidus A."/>
            <person name="Chu L."/>
            <person name="Mazur M."/>
            <person name="Goltsman E."/>
            <person name="Larsen N."/>
            <person name="D'Souza M."/>
            <person name="Walunas T."/>
            <person name="Grechkin Y."/>
            <person name="Pusch G."/>
            <person name="Haselkorn R."/>
            <person name="Fonstein M."/>
            <person name="Ehrlich S.D."/>
            <person name="Overbeek R."/>
            <person name="Kyrpides N.C."/>
        </authorList>
    </citation>
    <scope>NUCLEOTIDE SEQUENCE [LARGE SCALE GENOMIC DNA]</scope>
    <source>
        <strain>ATCC 14579 / DSM 31 / CCUG 7414 / JCM 2152 / NBRC 15305 / NCIMB 9373 / NCTC 2599 / NRRL B-3711</strain>
    </source>
</reference>
<organism>
    <name type="scientific">Bacillus cereus (strain ATCC 14579 / DSM 31 / CCUG 7414 / JCM 2152 / NBRC 15305 / NCIMB 9373 / NCTC 2599 / NRRL B-3711)</name>
    <dbReference type="NCBI Taxonomy" id="226900"/>
    <lineage>
        <taxon>Bacteria</taxon>
        <taxon>Bacillati</taxon>
        <taxon>Bacillota</taxon>
        <taxon>Bacilli</taxon>
        <taxon>Bacillales</taxon>
        <taxon>Bacillaceae</taxon>
        <taxon>Bacillus</taxon>
        <taxon>Bacillus cereus group</taxon>
    </lineage>
</organism>